<evidence type="ECO:0000255" key="1">
    <source>
        <dbReference type="HAMAP-Rule" id="MF_00531"/>
    </source>
</evidence>
<evidence type="ECO:0000305" key="2"/>
<name>RS19_LATSS</name>
<dbReference type="EMBL" id="CR936503">
    <property type="protein sequence ID" value="CAI56068.1"/>
    <property type="molecule type" value="Genomic_DNA"/>
</dbReference>
<dbReference type="RefSeq" id="WP_004270198.1">
    <property type="nucleotide sequence ID" value="NC_007576.1"/>
</dbReference>
<dbReference type="SMR" id="Q38UR6"/>
<dbReference type="STRING" id="314315.LCA_1760"/>
<dbReference type="GeneID" id="57132677"/>
<dbReference type="KEGG" id="lsa:LCA_1760"/>
<dbReference type="eggNOG" id="COG0185">
    <property type="taxonomic scope" value="Bacteria"/>
</dbReference>
<dbReference type="HOGENOM" id="CLU_144911_0_1_9"/>
<dbReference type="OrthoDB" id="9797833at2"/>
<dbReference type="Proteomes" id="UP000002707">
    <property type="component" value="Chromosome"/>
</dbReference>
<dbReference type="GO" id="GO:0005737">
    <property type="term" value="C:cytoplasm"/>
    <property type="evidence" value="ECO:0007669"/>
    <property type="project" value="UniProtKB-ARBA"/>
</dbReference>
<dbReference type="GO" id="GO:0015935">
    <property type="term" value="C:small ribosomal subunit"/>
    <property type="evidence" value="ECO:0007669"/>
    <property type="project" value="InterPro"/>
</dbReference>
<dbReference type="GO" id="GO:0019843">
    <property type="term" value="F:rRNA binding"/>
    <property type="evidence" value="ECO:0007669"/>
    <property type="project" value="UniProtKB-UniRule"/>
</dbReference>
<dbReference type="GO" id="GO:0003735">
    <property type="term" value="F:structural constituent of ribosome"/>
    <property type="evidence" value="ECO:0007669"/>
    <property type="project" value="InterPro"/>
</dbReference>
<dbReference type="GO" id="GO:0000028">
    <property type="term" value="P:ribosomal small subunit assembly"/>
    <property type="evidence" value="ECO:0007669"/>
    <property type="project" value="TreeGrafter"/>
</dbReference>
<dbReference type="GO" id="GO:0006412">
    <property type="term" value="P:translation"/>
    <property type="evidence" value="ECO:0007669"/>
    <property type="project" value="UniProtKB-UniRule"/>
</dbReference>
<dbReference type="FunFam" id="3.30.860.10:FF:000001">
    <property type="entry name" value="30S ribosomal protein S19"/>
    <property type="match status" value="1"/>
</dbReference>
<dbReference type="Gene3D" id="3.30.860.10">
    <property type="entry name" value="30s Ribosomal Protein S19, Chain A"/>
    <property type="match status" value="1"/>
</dbReference>
<dbReference type="HAMAP" id="MF_00531">
    <property type="entry name" value="Ribosomal_uS19"/>
    <property type="match status" value="1"/>
</dbReference>
<dbReference type="InterPro" id="IPR002222">
    <property type="entry name" value="Ribosomal_uS19"/>
</dbReference>
<dbReference type="InterPro" id="IPR005732">
    <property type="entry name" value="Ribosomal_uS19_bac-type"/>
</dbReference>
<dbReference type="InterPro" id="IPR020934">
    <property type="entry name" value="Ribosomal_uS19_CS"/>
</dbReference>
<dbReference type="InterPro" id="IPR023575">
    <property type="entry name" value="Ribosomal_uS19_SF"/>
</dbReference>
<dbReference type="NCBIfam" id="TIGR01050">
    <property type="entry name" value="rpsS_bact"/>
    <property type="match status" value="1"/>
</dbReference>
<dbReference type="PANTHER" id="PTHR11880">
    <property type="entry name" value="RIBOSOMAL PROTEIN S19P FAMILY MEMBER"/>
    <property type="match status" value="1"/>
</dbReference>
<dbReference type="PANTHER" id="PTHR11880:SF8">
    <property type="entry name" value="SMALL RIBOSOMAL SUBUNIT PROTEIN US19M"/>
    <property type="match status" value="1"/>
</dbReference>
<dbReference type="Pfam" id="PF00203">
    <property type="entry name" value="Ribosomal_S19"/>
    <property type="match status" value="1"/>
</dbReference>
<dbReference type="PIRSF" id="PIRSF002144">
    <property type="entry name" value="Ribosomal_S19"/>
    <property type="match status" value="1"/>
</dbReference>
<dbReference type="PRINTS" id="PR00975">
    <property type="entry name" value="RIBOSOMALS19"/>
</dbReference>
<dbReference type="SUPFAM" id="SSF54570">
    <property type="entry name" value="Ribosomal protein S19"/>
    <property type="match status" value="1"/>
</dbReference>
<dbReference type="PROSITE" id="PS00323">
    <property type="entry name" value="RIBOSOMAL_S19"/>
    <property type="match status" value="1"/>
</dbReference>
<proteinExistence type="inferred from homology"/>
<reference key="1">
    <citation type="journal article" date="2005" name="Nat. Biotechnol.">
        <title>The complete genome sequence of the meat-borne lactic acid bacterium Lactobacillus sakei 23K.</title>
        <authorList>
            <person name="Chaillou S."/>
            <person name="Champomier-Verges M.-C."/>
            <person name="Cornet M."/>
            <person name="Crutz-Le Coq A.-M."/>
            <person name="Dudez A.-M."/>
            <person name="Martin V."/>
            <person name="Beaufils S."/>
            <person name="Darbon-Rongere E."/>
            <person name="Bossy R."/>
            <person name="Loux V."/>
            <person name="Zagorec M."/>
        </authorList>
    </citation>
    <scope>NUCLEOTIDE SEQUENCE [LARGE SCALE GENOMIC DNA]</scope>
    <source>
        <strain>23K</strain>
    </source>
</reference>
<feature type="chain" id="PRO_0000265375" description="Small ribosomal subunit protein uS19">
    <location>
        <begin position="1"/>
        <end position="93"/>
    </location>
</feature>
<gene>
    <name evidence="1" type="primary">rpsS</name>
    <name type="ordered locus">LCA_1760</name>
</gene>
<keyword id="KW-1185">Reference proteome</keyword>
<keyword id="KW-0687">Ribonucleoprotein</keyword>
<keyword id="KW-0689">Ribosomal protein</keyword>
<keyword id="KW-0694">RNA-binding</keyword>
<keyword id="KW-0699">rRNA-binding</keyword>
<organism>
    <name type="scientific">Latilactobacillus sakei subsp. sakei (strain 23K)</name>
    <name type="common">Lactobacillus sakei subsp. sakei</name>
    <dbReference type="NCBI Taxonomy" id="314315"/>
    <lineage>
        <taxon>Bacteria</taxon>
        <taxon>Bacillati</taxon>
        <taxon>Bacillota</taxon>
        <taxon>Bacilli</taxon>
        <taxon>Lactobacillales</taxon>
        <taxon>Lactobacillaceae</taxon>
        <taxon>Latilactobacillus</taxon>
    </lineage>
</organism>
<sequence length="93" mass="10543">MSRSLKKGPFADAHLLNKIEAQADSEKKQVIKTWSRRSTIFPSFIGYTIAVYDGRKHVPVFISDDMVGHKLGEFVPTRTFHGHGNDDKKTKAR</sequence>
<comment type="function">
    <text evidence="1">Protein S19 forms a complex with S13 that binds strongly to the 16S ribosomal RNA.</text>
</comment>
<comment type="similarity">
    <text evidence="1">Belongs to the universal ribosomal protein uS19 family.</text>
</comment>
<accession>Q38UR6</accession>
<protein>
    <recommendedName>
        <fullName evidence="1">Small ribosomal subunit protein uS19</fullName>
    </recommendedName>
    <alternativeName>
        <fullName evidence="2">30S ribosomal protein S19</fullName>
    </alternativeName>
</protein>